<comment type="function">
    <text evidence="1">The glycine cleavage system catalyzes the degradation of glycine.</text>
</comment>
<comment type="catalytic activity">
    <reaction evidence="1">
        <text>N(6)-[(R)-S(8)-aminomethyldihydrolipoyl]-L-lysyl-[protein] + (6S)-5,6,7,8-tetrahydrofolate = N(6)-[(R)-dihydrolipoyl]-L-lysyl-[protein] + (6R)-5,10-methylene-5,6,7,8-tetrahydrofolate + NH4(+)</text>
        <dbReference type="Rhea" id="RHEA:16945"/>
        <dbReference type="Rhea" id="RHEA-COMP:10475"/>
        <dbReference type="Rhea" id="RHEA-COMP:10492"/>
        <dbReference type="ChEBI" id="CHEBI:15636"/>
        <dbReference type="ChEBI" id="CHEBI:28938"/>
        <dbReference type="ChEBI" id="CHEBI:57453"/>
        <dbReference type="ChEBI" id="CHEBI:83100"/>
        <dbReference type="ChEBI" id="CHEBI:83143"/>
        <dbReference type="EC" id="2.1.2.10"/>
    </reaction>
</comment>
<comment type="subunit">
    <text evidence="1">The glycine cleavage system is composed of four proteins: P, T, L and H.</text>
</comment>
<comment type="similarity">
    <text evidence="1">Belongs to the GcvT family.</text>
</comment>
<dbReference type="EC" id="2.1.2.10" evidence="1"/>
<dbReference type="EMBL" id="CP000308">
    <property type="protein sequence ID" value="ABG12328.1"/>
    <property type="molecule type" value="Genomic_DNA"/>
</dbReference>
<dbReference type="RefSeq" id="WP_002209949.1">
    <property type="nucleotide sequence ID" value="NZ_CP009906.1"/>
</dbReference>
<dbReference type="SMR" id="Q1CB44"/>
<dbReference type="GeneID" id="57973733"/>
<dbReference type="KEGG" id="ypa:YPA_0360"/>
<dbReference type="Proteomes" id="UP000001971">
    <property type="component" value="Chromosome"/>
</dbReference>
<dbReference type="GO" id="GO:0005829">
    <property type="term" value="C:cytosol"/>
    <property type="evidence" value="ECO:0007669"/>
    <property type="project" value="TreeGrafter"/>
</dbReference>
<dbReference type="GO" id="GO:0005960">
    <property type="term" value="C:glycine cleavage complex"/>
    <property type="evidence" value="ECO:0007669"/>
    <property type="project" value="InterPro"/>
</dbReference>
<dbReference type="GO" id="GO:0004047">
    <property type="term" value="F:aminomethyltransferase activity"/>
    <property type="evidence" value="ECO:0007669"/>
    <property type="project" value="UniProtKB-UniRule"/>
</dbReference>
<dbReference type="GO" id="GO:0008483">
    <property type="term" value="F:transaminase activity"/>
    <property type="evidence" value="ECO:0007669"/>
    <property type="project" value="UniProtKB-KW"/>
</dbReference>
<dbReference type="GO" id="GO:0019464">
    <property type="term" value="P:glycine decarboxylation via glycine cleavage system"/>
    <property type="evidence" value="ECO:0007669"/>
    <property type="project" value="UniProtKB-UniRule"/>
</dbReference>
<dbReference type="FunFam" id="2.40.30.110:FF:000001">
    <property type="entry name" value="Aminomethyltransferase"/>
    <property type="match status" value="1"/>
</dbReference>
<dbReference type="FunFam" id="3.30.70.1400:FF:000001">
    <property type="entry name" value="Aminomethyltransferase"/>
    <property type="match status" value="1"/>
</dbReference>
<dbReference type="FunFam" id="4.10.1250.10:FF:000001">
    <property type="entry name" value="Aminomethyltransferase"/>
    <property type="match status" value="1"/>
</dbReference>
<dbReference type="Gene3D" id="2.40.30.110">
    <property type="entry name" value="Aminomethyltransferase beta-barrel domains"/>
    <property type="match status" value="1"/>
</dbReference>
<dbReference type="Gene3D" id="3.30.70.1400">
    <property type="entry name" value="Aminomethyltransferase beta-barrel domains"/>
    <property type="match status" value="1"/>
</dbReference>
<dbReference type="Gene3D" id="4.10.1250.10">
    <property type="entry name" value="Aminomethyltransferase fragment"/>
    <property type="match status" value="1"/>
</dbReference>
<dbReference type="Gene3D" id="3.30.1360.120">
    <property type="entry name" value="Probable tRNA modification gtpase trme, domain 1"/>
    <property type="match status" value="1"/>
</dbReference>
<dbReference type="HAMAP" id="MF_00259">
    <property type="entry name" value="GcvT"/>
    <property type="match status" value="1"/>
</dbReference>
<dbReference type="InterPro" id="IPR006223">
    <property type="entry name" value="GCS_T"/>
</dbReference>
<dbReference type="InterPro" id="IPR022903">
    <property type="entry name" value="GCS_T_bac"/>
</dbReference>
<dbReference type="InterPro" id="IPR013977">
    <property type="entry name" value="GCST_C"/>
</dbReference>
<dbReference type="InterPro" id="IPR006222">
    <property type="entry name" value="GCV_T_N"/>
</dbReference>
<dbReference type="InterPro" id="IPR028896">
    <property type="entry name" value="GcvT/YgfZ/DmdA"/>
</dbReference>
<dbReference type="InterPro" id="IPR029043">
    <property type="entry name" value="GcvT/YgfZ_C"/>
</dbReference>
<dbReference type="InterPro" id="IPR027266">
    <property type="entry name" value="TrmE/GcvT_dom1"/>
</dbReference>
<dbReference type="NCBIfam" id="TIGR00528">
    <property type="entry name" value="gcvT"/>
    <property type="match status" value="1"/>
</dbReference>
<dbReference type="NCBIfam" id="NF001567">
    <property type="entry name" value="PRK00389.1"/>
    <property type="match status" value="1"/>
</dbReference>
<dbReference type="PANTHER" id="PTHR43757">
    <property type="entry name" value="AMINOMETHYLTRANSFERASE"/>
    <property type="match status" value="1"/>
</dbReference>
<dbReference type="PANTHER" id="PTHR43757:SF2">
    <property type="entry name" value="AMINOMETHYLTRANSFERASE, MITOCHONDRIAL"/>
    <property type="match status" value="1"/>
</dbReference>
<dbReference type="Pfam" id="PF01571">
    <property type="entry name" value="GCV_T"/>
    <property type="match status" value="1"/>
</dbReference>
<dbReference type="Pfam" id="PF08669">
    <property type="entry name" value="GCV_T_C"/>
    <property type="match status" value="1"/>
</dbReference>
<dbReference type="PIRSF" id="PIRSF006487">
    <property type="entry name" value="GcvT"/>
    <property type="match status" value="1"/>
</dbReference>
<dbReference type="SUPFAM" id="SSF101790">
    <property type="entry name" value="Aminomethyltransferase beta-barrel domain"/>
    <property type="match status" value="1"/>
</dbReference>
<dbReference type="SUPFAM" id="SSF103025">
    <property type="entry name" value="Folate-binding domain"/>
    <property type="match status" value="1"/>
</dbReference>
<sequence>MAKQTPLYDQHVACGARMVDFHGWMMPLHYGSQIDEHHFVRQDAGMFDVSHMTIVDLHGNRTREFLRYLLANDVAKLTQPGKALYTGMLNESGGVIDDLIVYFLSEDYFRLVVNSATRDKDLAWISQHAEPYQVEVTVRDDLALIAVQGPQAQQKVATLLTTEQQQAIAGMKPFFGIQTGDLFIATTGYTGEAGYEIALPKQQVVAFWQQLLAAGVKPAGLGARDTLRLEAGMNLYGQEMDEKTSPLAANMGWTVAWQPEDRQFIGRAALERQRMKGTEQLVGLIMTEKGVLRNELPVYFFDAAGNQHVGVITSGSFSPTLGFSIALARVPAGIGEHAVVQIRNREMPVRVTKPGFVRAGKAIVL</sequence>
<gene>
    <name evidence="1" type="primary">gcvT</name>
    <name type="ordered locus">YPA_0360</name>
</gene>
<name>GCST_YERPA</name>
<feature type="chain" id="PRO_1000047731" description="Aminomethyltransferase">
    <location>
        <begin position="1"/>
        <end position="365"/>
    </location>
</feature>
<accession>Q1CB44</accession>
<reference key="1">
    <citation type="journal article" date="2006" name="J. Bacteriol.">
        <title>Complete genome sequence of Yersinia pestis strains Antiqua and Nepal516: evidence of gene reduction in an emerging pathogen.</title>
        <authorList>
            <person name="Chain P.S.G."/>
            <person name="Hu P."/>
            <person name="Malfatti S.A."/>
            <person name="Radnedge L."/>
            <person name="Larimer F."/>
            <person name="Vergez L.M."/>
            <person name="Worsham P."/>
            <person name="Chu M.C."/>
            <person name="Andersen G.L."/>
        </authorList>
    </citation>
    <scope>NUCLEOTIDE SEQUENCE [LARGE SCALE GENOMIC DNA]</scope>
    <source>
        <strain>Antiqua</strain>
    </source>
</reference>
<keyword id="KW-0032">Aminotransferase</keyword>
<keyword id="KW-0808">Transferase</keyword>
<protein>
    <recommendedName>
        <fullName evidence="1">Aminomethyltransferase</fullName>
        <ecNumber evidence="1">2.1.2.10</ecNumber>
    </recommendedName>
    <alternativeName>
        <fullName evidence="1">Glycine cleavage system T protein</fullName>
    </alternativeName>
</protein>
<proteinExistence type="inferred from homology"/>
<evidence type="ECO:0000255" key="1">
    <source>
        <dbReference type="HAMAP-Rule" id="MF_00259"/>
    </source>
</evidence>
<organism>
    <name type="scientific">Yersinia pestis bv. Antiqua (strain Antiqua)</name>
    <dbReference type="NCBI Taxonomy" id="360102"/>
    <lineage>
        <taxon>Bacteria</taxon>
        <taxon>Pseudomonadati</taxon>
        <taxon>Pseudomonadota</taxon>
        <taxon>Gammaproteobacteria</taxon>
        <taxon>Enterobacterales</taxon>
        <taxon>Yersiniaceae</taxon>
        <taxon>Yersinia</taxon>
    </lineage>
</organism>